<feature type="chain" id="PRO_0000080326" description="Phosphatidylinositol N-acetylglucosaminyltransferase subunit A">
    <location>
        <begin position="1"/>
        <end position="484"/>
    </location>
</feature>
<feature type="topological domain" description="Cytoplasmic" evidence="20">
    <location>
        <begin position="1"/>
        <end position="421"/>
    </location>
</feature>
<feature type="transmembrane region" description="Helical" evidence="1">
    <location>
        <begin position="422"/>
        <end position="442"/>
    </location>
</feature>
<feature type="topological domain" description="Lumenal" evidence="20">
    <location>
        <begin position="443"/>
        <end position="484"/>
    </location>
</feature>
<feature type="modified residue" description="Phosphoserine" evidence="23 24">
    <location>
        <position position="21"/>
    </location>
</feature>
<feature type="modified residue" description="Phosphoserine" evidence="24">
    <location>
        <position position="24"/>
    </location>
</feature>
<feature type="glycosylation site" description="N-linked (GlcNAc...) asparagine" evidence="2">
    <location>
        <position position="467"/>
    </location>
</feature>
<feature type="splice variant" id="VSP_043366" description="In isoform 3." evidence="18">
    <original>MACR</original>
    <variation>MELT</variation>
    <location>
        <begin position="1"/>
        <end position="4"/>
    </location>
</feature>
<feature type="splice variant" id="VSP_043367" description="In isoform 3." evidence="18">
    <location>
        <begin position="5"/>
        <end position="238"/>
    </location>
</feature>
<feature type="splice variant" id="VSP_001802" description="In isoform 2." evidence="19">
    <location>
        <begin position="115"/>
        <end position="283"/>
    </location>
</feature>
<feature type="sequence variant" id="VAR_015442" description="In PNH1; dbSNP:rs34422225." evidence="3">
    <original>R</original>
    <variation>W</variation>
    <location>
        <position position="19"/>
    </location>
</feature>
<feature type="sequence variant" id="VAR_015436" description="In PNH1." evidence="3">
    <original>D</original>
    <variation>H</variation>
    <location>
        <position position="40"/>
    </location>
</feature>
<feature type="sequence variant" id="VAR_015437" description="In PNH1." evidence="3">
    <original>G</original>
    <variation>A</variation>
    <location>
        <position position="48"/>
    </location>
</feature>
<feature type="sequence variant" id="VAR_015438" description="In PNH1." evidence="3">
    <original>G</original>
    <variation>D</variation>
    <location>
        <position position="48"/>
    </location>
</feature>
<feature type="sequence variant" id="VAR_015439" description="In PNH1." evidence="4">
    <original>G</original>
    <variation>V</variation>
    <location>
        <position position="48"/>
    </location>
</feature>
<feature type="sequence variant" id="VAR_071069" description="In MCAHS2; dbSNP:rs587777398." evidence="9">
    <original>R</original>
    <variation>L</variation>
    <location>
        <position position="77"/>
    </location>
</feature>
<feature type="sequence variant" id="VAR_087043" description="In NEDEPH; does not fully rescue defective HAMP expression in PIGA-deficient cells overexpressing HJV, suggesting decreased function in GPI anchor biosynthesis and absent or reduced HJV anchorage at the cell membrane." evidence="13">
    <original>R</original>
    <variation>Q</variation>
    <location>
        <position position="77"/>
    </location>
</feature>
<feature type="sequence variant" id="VAR_071070" description="In MCAHS2; dbSNP:rs587777400." evidence="7">
    <original>P</original>
    <variation>L</variation>
    <location>
        <position position="93"/>
    </location>
</feature>
<feature type="sequence variant" id="VAR_071071" description="In MCAHS2; dbSNP:rs587777396." evidence="9">
    <original>R</original>
    <variation>W</variation>
    <location>
        <position position="119"/>
    </location>
</feature>
<feature type="sequence variant" id="VAR_087044" description="In NEDEPH; uncertain significance." evidence="13">
    <original>S</original>
    <variation>L</variation>
    <location>
        <position position="127"/>
    </location>
</feature>
<feature type="sequence variant" id="VAR_015440" description="In PNH1." evidence="3">
    <original>H</original>
    <variation>R</variation>
    <location>
        <position position="128"/>
    </location>
</feature>
<feature type="sequence variant" id="VAR_078230" description="Found in a patient with infantile onset epileptic encephalopathy with dyskinesia and microcephaly; likely pathogenic." evidence="12">
    <original>A</original>
    <variation>V</variation>
    <location>
        <position position="135"/>
    </location>
</feature>
<feature type="sequence variant" id="VAR_005531" description="In PNH1." evidence="15">
    <original>S</original>
    <variation>F</variation>
    <location>
        <position position="155"/>
    </location>
</feature>
<feature type="sequence variant" id="VAR_071072" description="In MCAHS2; dbSNP:rs201119959." evidence="9">
    <original>I</original>
    <variation>F</variation>
    <location>
        <position position="206"/>
    </location>
</feature>
<feature type="sequence variant" id="VAR_015441" description="In PNH1." evidence="3">
    <original>G</original>
    <variation>R</variation>
    <location>
        <position position="239"/>
    </location>
</feature>
<feature type="sequence variant" id="VAR_005532" description="In PNH1." evidence="14">
    <original>N</original>
    <variation>D</variation>
    <location>
        <position position="297"/>
    </location>
</feature>
<feature type="sequence variant" id="VAR_087045" description="In NEDEPH; does not fully rescue defective HAMP expression in PIGA-deficient cells overexpressing HJV, suggesting decreased function in GPI anchor biosynthesis and absent or reduced HJV anchorage at the cell membrane." evidence="13">
    <original>L</original>
    <variation>P</variation>
    <location>
        <position position="344"/>
    </location>
</feature>
<feature type="sequence variant" id="VAR_071073" description="In NEDEPH; does not rescue defective HAMP expression in PIGA-deficient cells overexpressing HJV, suggesting decreased function in GPI anchor biosynthesis and absent or reduced HJV anchorage at the cell membrane." evidence="8 13">
    <location>
        <position position="344"/>
    </location>
</feature>
<feature type="sequence variant" id="VAR_078721" description="In MCAHS2; uncertain significance." evidence="11">
    <original>L</original>
    <variation>S</variation>
    <location>
        <position position="355"/>
    </location>
</feature>
<feature type="sequence variant" id="VAR_087046" description="In MCAHS2; decreased function in GPI anchor biosynthesis; does not fully restore GPI-anchored CD59 surface expression when transfected in PIGA-null cells; does not rescue defective HAMP expression in PIGA-deficient cells overexpressing HJV, suggesting absent or reduced HJV anchorage at the cell membrane." evidence="6 9 10 13">
    <location>
        <begin position="412"/>
        <end position="484"/>
    </location>
</feature>
<proteinExistence type="evidence at protein level"/>
<keyword id="KW-0025">Alternative splicing</keyword>
<keyword id="KW-0225">Disease variant</keyword>
<keyword id="KW-0256">Endoplasmic reticulum</keyword>
<keyword id="KW-0887">Epilepsy</keyword>
<keyword id="KW-0325">Glycoprotein</keyword>
<keyword id="KW-0328">Glycosyltransferase</keyword>
<keyword id="KW-0337">GPI-anchor biosynthesis</keyword>
<keyword id="KW-0991">Intellectual disability</keyword>
<keyword id="KW-0443">Lipid metabolism</keyword>
<keyword id="KW-0472">Membrane</keyword>
<keyword id="KW-0597">Phosphoprotein</keyword>
<keyword id="KW-1267">Proteomics identification</keyword>
<keyword id="KW-1185">Reference proteome</keyword>
<keyword id="KW-0808">Transferase</keyword>
<keyword id="KW-0812">Transmembrane</keyword>
<keyword id="KW-1133">Transmembrane helix</keyword>
<dbReference type="EC" id="2.4.1.198" evidence="21"/>
<dbReference type="EMBL" id="D11466">
    <property type="protein sequence ID" value="BAA02019.1"/>
    <property type="molecule type" value="mRNA"/>
</dbReference>
<dbReference type="EMBL" id="X77725">
    <property type="protein sequence ID" value="CAB57276.1"/>
    <property type="status" value="ALT_SEQ"/>
    <property type="molecule type" value="Genomic_DNA"/>
</dbReference>
<dbReference type="EMBL" id="X77726">
    <property type="protein sequence ID" value="CAB57276.1"/>
    <property type="status" value="JOINED"/>
    <property type="molecule type" value="Genomic_DNA"/>
</dbReference>
<dbReference type="EMBL" id="X77727">
    <property type="protein sequence ID" value="CAB57276.1"/>
    <property type="status" value="JOINED"/>
    <property type="molecule type" value="Genomic_DNA"/>
</dbReference>
<dbReference type="EMBL" id="X77728">
    <property type="protein sequence ID" value="CAB57276.1"/>
    <property type="status" value="JOINED"/>
    <property type="molecule type" value="Genomic_DNA"/>
</dbReference>
<dbReference type="EMBL" id="D28791">
    <property type="protein sequence ID" value="BAA05966.1"/>
    <property type="molecule type" value="Genomic_DNA"/>
</dbReference>
<dbReference type="EMBL" id="S74936">
    <property type="protein sequence ID" value="AAD14160.1"/>
    <property type="molecule type" value="mRNA"/>
</dbReference>
<dbReference type="EMBL" id="AK303538">
    <property type="protein sequence ID" value="BAG64564.1"/>
    <property type="molecule type" value="mRNA"/>
</dbReference>
<dbReference type="EMBL" id="AC095351">
    <property type="status" value="NOT_ANNOTATED_CDS"/>
    <property type="molecule type" value="Genomic_DNA"/>
</dbReference>
<dbReference type="EMBL" id="BC038236">
    <property type="protein sequence ID" value="AAH38236.1"/>
    <property type="molecule type" value="mRNA"/>
</dbReference>
<dbReference type="EMBL" id="S61523">
    <property type="protein sequence ID" value="AAD13929.1"/>
    <property type="molecule type" value="mRNA"/>
</dbReference>
<dbReference type="CCDS" id="CCDS14165.1">
    <molecule id="P37287-1"/>
</dbReference>
<dbReference type="CCDS" id="CCDS48086.2">
    <molecule id="P37287-3"/>
</dbReference>
<dbReference type="PIR" id="A46217">
    <property type="entry name" value="A46217"/>
</dbReference>
<dbReference type="RefSeq" id="NP_002632.1">
    <molecule id="P37287-1"/>
    <property type="nucleotide sequence ID" value="NM_002641.4"/>
</dbReference>
<dbReference type="RefSeq" id="NP_065206.3">
    <molecule id="P37287-3"/>
    <property type="nucleotide sequence ID" value="NM_020473.3"/>
</dbReference>
<dbReference type="RefSeq" id="XP_016885070.1">
    <property type="nucleotide sequence ID" value="XM_017029581.1"/>
</dbReference>
<dbReference type="SMR" id="P37287"/>
<dbReference type="BioGRID" id="111295">
    <property type="interactions" value="46"/>
</dbReference>
<dbReference type="ComplexPortal" id="CPX-6502">
    <property type="entry name" value="Glycosylphosphatidylinositol-N-acetylglucosaminyltransferase complex"/>
</dbReference>
<dbReference type="CORUM" id="P37287"/>
<dbReference type="FunCoup" id="P37287">
    <property type="interactions" value="1168"/>
</dbReference>
<dbReference type="IntAct" id="P37287">
    <property type="interactions" value="47"/>
</dbReference>
<dbReference type="STRING" id="9606.ENSP00000369820"/>
<dbReference type="CAZy" id="GT4">
    <property type="family name" value="Glycosyltransferase Family 4"/>
</dbReference>
<dbReference type="GlyCosmos" id="P37287">
    <property type="glycosylation" value="1 site, No reported glycans"/>
</dbReference>
<dbReference type="GlyGen" id="P37287">
    <property type="glycosylation" value="2 sites"/>
</dbReference>
<dbReference type="iPTMnet" id="P37287"/>
<dbReference type="PhosphoSitePlus" id="P37287"/>
<dbReference type="BioMuta" id="PIGA"/>
<dbReference type="DMDM" id="585696"/>
<dbReference type="jPOST" id="P37287"/>
<dbReference type="MassIVE" id="P37287"/>
<dbReference type="PaxDb" id="9606-ENSP00000369820"/>
<dbReference type="PeptideAtlas" id="P37287"/>
<dbReference type="ProteomicsDB" id="55273">
    <molecule id="P37287-1"/>
</dbReference>
<dbReference type="ProteomicsDB" id="55274">
    <molecule id="P37287-2"/>
</dbReference>
<dbReference type="ProteomicsDB" id="55275">
    <molecule id="P37287-3"/>
</dbReference>
<dbReference type="Pumba" id="P37287"/>
<dbReference type="Antibodypedia" id="23929">
    <property type="antibodies" value="203 antibodies from 28 providers"/>
</dbReference>
<dbReference type="DNASU" id="5277"/>
<dbReference type="Ensembl" id="ENST00000333590.6">
    <molecule id="P37287-1"/>
    <property type="protein sequence ID" value="ENSP00000369820.3"/>
    <property type="gene ID" value="ENSG00000165195.16"/>
</dbReference>
<dbReference type="Ensembl" id="ENST00000482148.6">
    <molecule id="P37287-2"/>
    <property type="protein sequence ID" value="ENSP00000489528.1"/>
    <property type="gene ID" value="ENSG00000165195.16"/>
</dbReference>
<dbReference type="Ensembl" id="ENST00000542278.6">
    <molecule id="P37287-1"/>
    <property type="protein sequence ID" value="ENSP00000442653.2"/>
    <property type="gene ID" value="ENSG00000165195.16"/>
</dbReference>
<dbReference type="Ensembl" id="ENST00000634582.1">
    <molecule id="P37287-3"/>
    <property type="protein sequence ID" value="ENSP00000489540.1"/>
    <property type="gene ID" value="ENSG00000165195.16"/>
</dbReference>
<dbReference type="GeneID" id="5277"/>
<dbReference type="KEGG" id="hsa:5277"/>
<dbReference type="MANE-Select" id="ENST00000333590.6">
    <property type="protein sequence ID" value="ENSP00000369820.3"/>
    <property type="RefSeq nucleotide sequence ID" value="NM_002641.4"/>
    <property type="RefSeq protein sequence ID" value="NP_002632.1"/>
</dbReference>
<dbReference type="UCSC" id="uc004cwr.4">
    <molecule id="P37287-1"/>
    <property type="organism name" value="human"/>
</dbReference>
<dbReference type="AGR" id="HGNC:8957"/>
<dbReference type="CTD" id="5277"/>
<dbReference type="DisGeNET" id="5277"/>
<dbReference type="GeneCards" id="PIGA"/>
<dbReference type="HGNC" id="HGNC:8957">
    <property type="gene designation" value="PIGA"/>
</dbReference>
<dbReference type="HPA" id="ENSG00000165195">
    <property type="expression patterns" value="Low tissue specificity"/>
</dbReference>
<dbReference type="MalaCards" id="PIGA"/>
<dbReference type="MIM" id="300818">
    <property type="type" value="phenotype"/>
</dbReference>
<dbReference type="MIM" id="300868">
    <property type="type" value="phenotype"/>
</dbReference>
<dbReference type="MIM" id="301072">
    <property type="type" value="phenotype"/>
</dbReference>
<dbReference type="MIM" id="311770">
    <property type="type" value="gene"/>
</dbReference>
<dbReference type="neXtProt" id="NX_P37287"/>
<dbReference type="OpenTargets" id="ENSG00000165195"/>
<dbReference type="Orphanet" id="293181">
    <property type="disease" value="Epilepsy of infancy with migrating focal seizures"/>
</dbReference>
<dbReference type="Orphanet" id="397922">
    <property type="disease" value="Ferro-cerebro-cutaneous syndrome"/>
</dbReference>
<dbReference type="Orphanet" id="3451">
    <property type="disease" value="Infantile epileptic spasms syndrome"/>
</dbReference>
<dbReference type="Orphanet" id="300496">
    <property type="disease" value="Multiple congenital anomalies-hypotonia-seizures syndrome type 2"/>
</dbReference>
<dbReference type="Orphanet" id="447">
    <property type="disease" value="Paroxysmal nocturnal hemoglobinuria"/>
</dbReference>
<dbReference type="PharmGKB" id="PA33288"/>
<dbReference type="VEuPathDB" id="HostDB:ENSG00000165195"/>
<dbReference type="eggNOG" id="KOG1111">
    <property type="taxonomic scope" value="Eukaryota"/>
</dbReference>
<dbReference type="GeneTree" id="ENSGT00390000014405"/>
<dbReference type="HOGENOM" id="CLU_009583_19_3_1"/>
<dbReference type="InParanoid" id="P37287"/>
<dbReference type="OMA" id="SHFWMSG"/>
<dbReference type="OrthoDB" id="734129at2759"/>
<dbReference type="PAN-GO" id="P37287">
    <property type="GO annotations" value="3 GO annotations based on evolutionary models"/>
</dbReference>
<dbReference type="PhylomeDB" id="P37287"/>
<dbReference type="TreeFam" id="TF105675"/>
<dbReference type="PathwayCommons" id="P37287"/>
<dbReference type="Reactome" id="R-HSA-162710">
    <property type="pathway name" value="Synthesis of glycosylphosphatidylinositol (GPI)"/>
</dbReference>
<dbReference type="SignaLink" id="P37287"/>
<dbReference type="UniPathway" id="UPA00196"/>
<dbReference type="BioGRID-ORCS" id="5277">
    <property type="hits" value="19 hits in 781 CRISPR screens"/>
</dbReference>
<dbReference type="GeneWiki" id="PIGA"/>
<dbReference type="GenomeRNAi" id="5277"/>
<dbReference type="Pharos" id="P37287">
    <property type="development level" value="Tbio"/>
</dbReference>
<dbReference type="PRO" id="PR:P37287"/>
<dbReference type="Proteomes" id="UP000005640">
    <property type="component" value="Chromosome X"/>
</dbReference>
<dbReference type="RNAct" id="P37287">
    <property type="molecule type" value="protein"/>
</dbReference>
<dbReference type="Bgee" id="ENSG00000165195">
    <property type="expression patterns" value="Expressed in secondary oocyte and 179 other cell types or tissues"/>
</dbReference>
<dbReference type="ExpressionAtlas" id="P37287">
    <property type="expression patterns" value="baseline and differential"/>
</dbReference>
<dbReference type="GO" id="GO:0005789">
    <property type="term" value="C:endoplasmic reticulum membrane"/>
    <property type="evidence" value="ECO:0000314"/>
    <property type="project" value="HGNC-UCL"/>
</dbReference>
<dbReference type="GO" id="GO:0000506">
    <property type="term" value="C:glycosylphosphatidylinositol-N-acetylglucosaminyltransferase (GPI-GnT) complex"/>
    <property type="evidence" value="ECO:0000314"/>
    <property type="project" value="HGNC-UCL"/>
</dbReference>
<dbReference type="GO" id="GO:0016020">
    <property type="term" value="C:membrane"/>
    <property type="evidence" value="ECO:0007005"/>
    <property type="project" value="UniProtKB"/>
</dbReference>
<dbReference type="GO" id="GO:0017176">
    <property type="term" value="F:phosphatidylinositol N-acetylglucosaminyltransferase activity"/>
    <property type="evidence" value="ECO:0000318"/>
    <property type="project" value="GO_Central"/>
</dbReference>
<dbReference type="GO" id="GO:0008194">
    <property type="term" value="F:UDP-glycosyltransferase activity"/>
    <property type="evidence" value="ECO:0000304"/>
    <property type="project" value="Reactome"/>
</dbReference>
<dbReference type="GO" id="GO:1990830">
    <property type="term" value="P:cellular response to leukemia inhibitory factor"/>
    <property type="evidence" value="ECO:0007669"/>
    <property type="project" value="Ensembl"/>
</dbReference>
<dbReference type="GO" id="GO:0006506">
    <property type="term" value="P:GPI anchor biosynthetic process"/>
    <property type="evidence" value="ECO:0000318"/>
    <property type="project" value="GO_Central"/>
</dbReference>
<dbReference type="CDD" id="cd03796">
    <property type="entry name" value="GT4_PIG-A-like"/>
    <property type="match status" value="1"/>
</dbReference>
<dbReference type="FunFam" id="3.40.50.2000:FF:000059">
    <property type="entry name" value="Phosphatidylinositol glycan anchor biosynthesis class A"/>
    <property type="match status" value="1"/>
</dbReference>
<dbReference type="FunFam" id="3.40.50.2000:FF:000026">
    <property type="entry name" value="Phosphatidylinositol N-acetylglucosaminyltransferase subunit A"/>
    <property type="match status" value="1"/>
</dbReference>
<dbReference type="Gene3D" id="3.40.50.2000">
    <property type="entry name" value="Glycogen Phosphorylase B"/>
    <property type="match status" value="2"/>
</dbReference>
<dbReference type="InterPro" id="IPR001296">
    <property type="entry name" value="Glyco_trans_1"/>
</dbReference>
<dbReference type="InterPro" id="IPR039507">
    <property type="entry name" value="PIG-A/GPI3"/>
</dbReference>
<dbReference type="InterPro" id="IPR013234">
    <property type="entry name" value="PIGA_GPI_anchor_biosynthesis"/>
</dbReference>
<dbReference type="PANTHER" id="PTHR45871">
    <property type="entry name" value="N-ACETYLGLUCOSAMINYL-PHOSPHATIDYLINOSITOL BIOSYNTHETIC PROTEIN"/>
    <property type="match status" value="1"/>
</dbReference>
<dbReference type="PANTHER" id="PTHR45871:SF3">
    <property type="entry name" value="PHOSPHATIDYLINOSITOL N-ACETYLGLUCOSAMINYLTRANSFERASE SUBUNIT A"/>
    <property type="match status" value="1"/>
</dbReference>
<dbReference type="Pfam" id="PF00534">
    <property type="entry name" value="Glycos_transf_1"/>
    <property type="match status" value="1"/>
</dbReference>
<dbReference type="Pfam" id="PF08288">
    <property type="entry name" value="PIGA"/>
    <property type="match status" value="1"/>
</dbReference>
<dbReference type="SUPFAM" id="SSF53756">
    <property type="entry name" value="UDP-Glycosyltransferase/glycogen phosphorylase"/>
    <property type="match status" value="1"/>
</dbReference>
<gene>
    <name evidence="22" type="primary">PIGA</name>
</gene>
<reference key="1">
    <citation type="journal article" date="1993" name="Science">
        <title>The cloning of PIG-A, a component in the early step of GPI-anchor biosynthesis.</title>
        <authorList>
            <person name="Miyata T."/>
            <person name="Takeda J."/>
            <person name="Iida Y."/>
            <person name="Yamada N."/>
            <person name="Inoue N."/>
            <person name="Takahashi M."/>
            <person name="Maeda K."/>
            <person name="Kitani T."/>
            <person name="Kinoshita T."/>
        </authorList>
    </citation>
    <scope>NUCLEOTIDE SEQUENCE [MRNA] (ISOFORM 1)</scope>
</reference>
<reference key="2">
    <citation type="journal article" date="1994" name="Hum. Mol. Genet.">
        <title>Genomic organization of the X-linked gene (PIG-A) that is mutated in paroxysmal nocturnal haemoglobinuria and of a related autosomal pseudogene mapped to 12q21.</title>
        <authorList>
            <person name="Bessler M."/>
            <person name="Hillmen P."/>
            <person name="Longo L."/>
            <person name="Luzzatto L."/>
            <person name="Mason P.J."/>
        </authorList>
    </citation>
    <scope>NUCLEOTIDE SEQUENCE [GENOMIC DNA] (ISOFORM 1)</scope>
</reference>
<reference key="3">
    <citation type="journal article" date="1994" name="Blood">
        <title>Characterization of genomic PIG-A gene: a gene for glycosylphosphatidylinositol-anchor biosynthesis and paroxysmal nocturnal hemoglobinuria.</title>
        <authorList>
            <person name="Iida Y."/>
            <person name="Takeda J."/>
            <person name="Miyata T."/>
            <person name="Inoue N."/>
            <person name="Nishimura J."/>
            <person name="Kitani T."/>
            <person name="Maeda K."/>
            <person name="Kinoshita T."/>
        </authorList>
    </citation>
    <scope>NUCLEOTIDE SEQUENCE [GENOMIC DNA] (ISOFORM 1)</scope>
</reference>
<reference key="4">
    <citation type="journal article" date="1994" name="Braz. J. Med. Biol. Res.">
        <title>Characterization of alternatively spliced PIG-A transcripts in normal and paroxysmal nocturnal hemoglobinuria cells.</title>
        <authorList>
            <person name="Yu J."/>
            <person name="Nagarajan S."/>
            <person name="Ueda E."/>
            <person name="Knez J.J."/>
            <person name="Petersen R.B."/>
            <person name="Medof M.E."/>
        </authorList>
    </citation>
    <scope>NUCLEOTIDE SEQUENCE [MRNA] (ISOFORM 2)</scope>
</reference>
<reference key="5">
    <citation type="journal article" date="2004" name="Nat. Genet.">
        <title>Complete sequencing and characterization of 21,243 full-length human cDNAs.</title>
        <authorList>
            <person name="Ota T."/>
            <person name="Suzuki Y."/>
            <person name="Nishikawa T."/>
            <person name="Otsuki T."/>
            <person name="Sugiyama T."/>
            <person name="Irie R."/>
            <person name="Wakamatsu A."/>
            <person name="Hayashi K."/>
            <person name="Sato H."/>
            <person name="Nagai K."/>
            <person name="Kimura K."/>
            <person name="Makita H."/>
            <person name="Sekine M."/>
            <person name="Obayashi M."/>
            <person name="Nishi T."/>
            <person name="Shibahara T."/>
            <person name="Tanaka T."/>
            <person name="Ishii S."/>
            <person name="Yamamoto J."/>
            <person name="Saito K."/>
            <person name="Kawai Y."/>
            <person name="Isono Y."/>
            <person name="Nakamura Y."/>
            <person name="Nagahari K."/>
            <person name="Murakami K."/>
            <person name="Yasuda T."/>
            <person name="Iwayanagi T."/>
            <person name="Wagatsuma M."/>
            <person name="Shiratori A."/>
            <person name="Sudo H."/>
            <person name="Hosoiri T."/>
            <person name="Kaku Y."/>
            <person name="Kodaira H."/>
            <person name="Kondo H."/>
            <person name="Sugawara M."/>
            <person name="Takahashi M."/>
            <person name="Kanda K."/>
            <person name="Yokoi T."/>
            <person name="Furuya T."/>
            <person name="Kikkawa E."/>
            <person name="Omura Y."/>
            <person name="Abe K."/>
            <person name="Kamihara K."/>
            <person name="Katsuta N."/>
            <person name="Sato K."/>
            <person name="Tanikawa M."/>
            <person name="Yamazaki M."/>
            <person name="Ninomiya K."/>
            <person name="Ishibashi T."/>
            <person name="Yamashita H."/>
            <person name="Murakawa K."/>
            <person name="Fujimori K."/>
            <person name="Tanai H."/>
            <person name="Kimata M."/>
            <person name="Watanabe M."/>
            <person name="Hiraoka S."/>
            <person name="Chiba Y."/>
            <person name="Ishida S."/>
            <person name="Ono Y."/>
            <person name="Takiguchi S."/>
            <person name="Watanabe S."/>
            <person name="Yosida M."/>
            <person name="Hotuta T."/>
            <person name="Kusano J."/>
            <person name="Kanehori K."/>
            <person name="Takahashi-Fujii A."/>
            <person name="Hara H."/>
            <person name="Tanase T.-O."/>
            <person name="Nomura Y."/>
            <person name="Togiya S."/>
            <person name="Komai F."/>
            <person name="Hara R."/>
            <person name="Takeuchi K."/>
            <person name="Arita M."/>
            <person name="Imose N."/>
            <person name="Musashino K."/>
            <person name="Yuuki H."/>
            <person name="Oshima A."/>
            <person name="Sasaki N."/>
            <person name="Aotsuka S."/>
            <person name="Yoshikawa Y."/>
            <person name="Matsunawa H."/>
            <person name="Ichihara T."/>
            <person name="Shiohata N."/>
            <person name="Sano S."/>
            <person name="Moriya S."/>
            <person name="Momiyama H."/>
            <person name="Satoh N."/>
            <person name="Takami S."/>
            <person name="Terashima Y."/>
            <person name="Suzuki O."/>
            <person name="Nakagawa S."/>
            <person name="Senoh A."/>
            <person name="Mizoguchi H."/>
            <person name="Goto Y."/>
            <person name="Shimizu F."/>
            <person name="Wakebe H."/>
            <person name="Hishigaki H."/>
            <person name="Watanabe T."/>
            <person name="Sugiyama A."/>
            <person name="Takemoto M."/>
            <person name="Kawakami B."/>
            <person name="Yamazaki M."/>
            <person name="Watanabe K."/>
            <person name="Kumagai A."/>
            <person name="Itakura S."/>
            <person name="Fukuzumi Y."/>
            <person name="Fujimori Y."/>
            <person name="Komiyama M."/>
            <person name="Tashiro H."/>
            <person name="Tanigami A."/>
            <person name="Fujiwara T."/>
            <person name="Ono T."/>
            <person name="Yamada K."/>
            <person name="Fujii Y."/>
            <person name="Ozaki K."/>
            <person name="Hirao M."/>
            <person name="Ohmori Y."/>
            <person name="Kawabata A."/>
            <person name="Hikiji T."/>
            <person name="Kobatake N."/>
            <person name="Inagaki H."/>
            <person name="Ikema Y."/>
            <person name="Okamoto S."/>
            <person name="Okitani R."/>
            <person name="Kawakami T."/>
            <person name="Noguchi S."/>
            <person name="Itoh T."/>
            <person name="Shigeta K."/>
            <person name="Senba T."/>
            <person name="Matsumura K."/>
            <person name="Nakajima Y."/>
            <person name="Mizuno T."/>
            <person name="Morinaga M."/>
            <person name="Sasaki M."/>
            <person name="Togashi T."/>
            <person name="Oyama M."/>
            <person name="Hata H."/>
            <person name="Watanabe M."/>
            <person name="Komatsu T."/>
            <person name="Mizushima-Sugano J."/>
            <person name="Satoh T."/>
            <person name="Shirai Y."/>
            <person name="Takahashi Y."/>
            <person name="Nakagawa K."/>
            <person name="Okumura K."/>
            <person name="Nagase T."/>
            <person name="Nomura N."/>
            <person name="Kikuchi H."/>
            <person name="Masuho Y."/>
            <person name="Yamashita R."/>
            <person name="Nakai K."/>
            <person name="Yada T."/>
            <person name="Nakamura Y."/>
            <person name="Ohara O."/>
            <person name="Isogai T."/>
            <person name="Sugano S."/>
        </authorList>
    </citation>
    <scope>NUCLEOTIDE SEQUENCE [LARGE SCALE MRNA] (ISOFORM 3)</scope>
    <source>
        <tissue>Thymus</tissue>
    </source>
</reference>
<reference key="6">
    <citation type="journal article" date="2005" name="Nature">
        <title>The DNA sequence of the human X chromosome.</title>
        <authorList>
            <person name="Ross M.T."/>
            <person name="Grafham D.V."/>
            <person name="Coffey A.J."/>
            <person name="Scherer S."/>
            <person name="McLay K."/>
            <person name="Muzny D."/>
            <person name="Platzer M."/>
            <person name="Howell G.R."/>
            <person name="Burrows C."/>
            <person name="Bird C.P."/>
            <person name="Frankish A."/>
            <person name="Lovell F.L."/>
            <person name="Howe K.L."/>
            <person name="Ashurst J.L."/>
            <person name="Fulton R.S."/>
            <person name="Sudbrak R."/>
            <person name="Wen G."/>
            <person name="Jones M.C."/>
            <person name="Hurles M.E."/>
            <person name="Andrews T.D."/>
            <person name="Scott C.E."/>
            <person name="Searle S."/>
            <person name="Ramser J."/>
            <person name="Whittaker A."/>
            <person name="Deadman R."/>
            <person name="Carter N.P."/>
            <person name="Hunt S.E."/>
            <person name="Chen R."/>
            <person name="Cree A."/>
            <person name="Gunaratne P."/>
            <person name="Havlak P."/>
            <person name="Hodgson A."/>
            <person name="Metzker M.L."/>
            <person name="Richards S."/>
            <person name="Scott G."/>
            <person name="Steffen D."/>
            <person name="Sodergren E."/>
            <person name="Wheeler D.A."/>
            <person name="Worley K.C."/>
            <person name="Ainscough R."/>
            <person name="Ambrose K.D."/>
            <person name="Ansari-Lari M.A."/>
            <person name="Aradhya S."/>
            <person name="Ashwell R.I."/>
            <person name="Babbage A.K."/>
            <person name="Bagguley C.L."/>
            <person name="Ballabio A."/>
            <person name="Banerjee R."/>
            <person name="Barker G.E."/>
            <person name="Barlow K.F."/>
            <person name="Barrett I.P."/>
            <person name="Bates K.N."/>
            <person name="Beare D.M."/>
            <person name="Beasley H."/>
            <person name="Beasley O."/>
            <person name="Beck A."/>
            <person name="Bethel G."/>
            <person name="Blechschmidt K."/>
            <person name="Brady N."/>
            <person name="Bray-Allen S."/>
            <person name="Bridgeman A.M."/>
            <person name="Brown A.J."/>
            <person name="Brown M.J."/>
            <person name="Bonnin D."/>
            <person name="Bruford E.A."/>
            <person name="Buhay C."/>
            <person name="Burch P."/>
            <person name="Burford D."/>
            <person name="Burgess J."/>
            <person name="Burrill W."/>
            <person name="Burton J."/>
            <person name="Bye J.M."/>
            <person name="Carder C."/>
            <person name="Carrel L."/>
            <person name="Chako J."/>
            <person name="Chapman J.C."/>
            <person name="Chavez D."/>
            <person name="Chen E."/>
            <person name="Chen G."/>
            <person name="Chen Y."/>
            <person name="Chen Z."/>
            <person name="Chinault C."/>
            <person name="Ciccodicola A."/>
            <person name="Clark S.Y."/>
            <person name="Clarke G."/>
            <person name="Clee C.M."/>
            <person name="Clegg S."/>
            <person name="Clerc-Blankenburg K."/>
            <person name="Clifford K."/>
            <person name="Cobley V."/>
            <person name="Cole C.G."/>
            <person name="Conquer J.S."/>
            <person name="Corby N."/>
            <person name="Connor R.E."/>
            <person name="David R."/>
            <person name="Davies J."/>
            <person name="Davis C."/>
            <person name="Davis J."/>
            <person name="Delgado O."/>
            <person name="Deshazo D."/>
            <person name="Dhami P."/>
            <person name="Ding Y."/>
            <person name="Dinh H."/>
            <person name="Dodsworth S."/>
            <person name="Draper H."/>
            <person name="Dugan-Rocha S."/>
            <person name="Dunham A."/>
            <person name="Dunn M."/>
            <person name="Durbin K.J."/>
            <person name="Dutta I."/>
            <person name="Eades T."/>
            <person name="Ellwood M."/>
            <person name="Emery-Cohen A."/>
            <person name="Errington H."/>
            <person name="Evans K.L."/>
            <person name="Faulkner L."/>
            <person name="Francis F."/>
            <person name="Frankland J."/>
            <person name="Fraser A.E."/>
            <person name="Galgoczy P."/>
            <person name="Gilbert J."/>
            <person name="Gill R."/>
            <person name="Gloeckner G."/>
            <person name="Gregory S.G."/>
            <person name="Gribble S."/>
            <person name="Griffiths C."/>
            <person name="Grocock R."/>
            <person name="Gu Y."/>
            <person name="Gwilliam R."/>
            <person name="Hamilton C."/>
            <person name="Hart E.A."/>
            <person name="Hawes A."/>
            <person name="Heath P.D."/>
            <person name="Heitmann K."/>
            <person name="Hennig S."/>
            <person name="Hernandez J."/>
            <person name="Hinzmann B."/>
            <person name="Ho S."/>
            <person name="Hoffs M."/>
            <person name="Howden P.J."/>
            <person name="Huckle E.J."/>
            <person name="Hume J."/>
            <person name="Hunt P.J."/>
            <person name="Hunt A.R."/>
            <person name="Isherwood J."/>
            <person name="Jacob L."/>
            <person name="Johnson D."/>
            <person name="Jones S."/>
            <person name="de Jong P.J."/>
            <person name="Joseph S.S."/>
            <person name="Keenan S."/>
            <person name="Kelly S."/>
            <person name="Kershaw J.K."/>
            <person name="Khan Z."/>
            <person name="Kioschis P."/>
            <person name="Klages S."/>
            <person name="Knights A.J."/>
            <person name="Kosiura A."/>
            <person name="Kovar-Smith C."/>
            <person name="Laird G.K."/>
            <person name="Langford C."/>
            <person name="Lawlor S."/>
            <person name="Leversha M."/>
            <person name="Lewis L."/>
            <person name="Liu W."/>
            <person name="Lloyd C."/>
            <person name="Lloyd D.M."/>
            <person name="Loulseged H."/>
            <person name="Loveland J.E."/>
            <person name="Lovell J.D."/>
            <person name="Lozado R."/>
            <person name="Lu J."/>
            <person name="Lyne R."/>
            <person name="Ma J."/>
            <person name="Maheshwari M."/>
            <person name="Matthews L.H."/>
            <person name="McDowall J."/>
            <person name="McLaren S."/>
            <person name="McMurray A."/>
            <person name="Meidl P."/>
            <person name="Meitinger T."/>
            <person name="Milne S."/>
            <person name="Miner G."/>
            <person name="Mistry S.L."/>
            <person name="Morgan M."/>
            <person name="Morris S."/>
            <person name="Mueller I."/>
            <person name="Mullikin J.C."/>
            <person name="Nguyen N."/>
            <person name="Nordsiek G."/>
            <person name="Nyakatura G."/>
            <person name="O'dell C.N."/>
            <person name="Okwuonu G."/>
            <person name="Palmer S."/>
            <person name="Pandian R."/>
            <person name="Parker D."/>
            <person name="Parrish J."/>
            <person name="Pasternak S."/>
            <person name="Patel D."/>
            <person name="Pearce A.V."/>
            <person name="Pearson D.M."/>
            <person name="Pelan S.E."/>
            <person name="Perez L."/>
            <person name="Porter K.M."/>
            <person name="Ramsey Y."/>
            <person name="Reichwald K."/>
            <person name="Rhodes S."/>
            <person name="Ridler K.A."/>
            <person name="Schlessinger D."/>
            <person name="Schueler M.G."/>
            <person name="Sehra H.K."/>
            <person name="Shaw-Smith C."/>
            <person name="Shen H."/>
            <person name="Sheridan E.M."/>
            <person name="Shownkeen R."/>
            <person name="Skuce C.D."/>
            <person name="Smith M.L."/>
            <person name="Sotheran E.C."/>
            <person name="Steingruber H.E."/>
            <person name="Steward C.A."/>
            <person name="Storey R."/>
            <person name="Swann R.M."/>
            <person name="Swarbreck D."/>
            <person name="Tabor P.E."/>
            <person name="Taudien S."/>
            <person name="Taylor T."/>
            <person name="Teague B."/>
            <person name="Thomas K."/>
            <person name="Thorpe A."/>
            <person name="Timms K."/>
            <person name="Tracey A."/>
            <person name="Trevanion S."/>
            <person name="Tromans A.C."/>
            <person name="d'Urso M."/>
            <person name="Verduzco D."/>
            <person name="Villasana D."/>
            <person name="Waldron L."/>
            <person name="Wall M."/>
            <person name="Wang Q."/>
            <person name="Warren J."/>
            <person name="Warry G.L."/>
            <person name="Wei X."/>
            <person name="West A."/>
            <person name="Whitehead S.L."/>
            <person name="Whiteley M.N."/>
            <person name="Wilkinson J.E."/>
            <person name="Willey D.L."/>
            <person name="Williams G."/>
            <person name="Williams L."/>
            <person name="Williamson A."/>
            <person name="Williamson H."/>
            <person name="Wilming L."/>
            <person name="Woodmansey R.L."/>
            <person name="Wray P.W."/>
            <person name="Yen J."/>
            <person name="Zhang J."/>
            <person name="Zhou J."/>
            <person name="Zoghbi H."/>
            <person name="Zorilla S."/>
            <person name="Buck D."/>
            <person name="Reinhardt R."/>
            <person name="Poustka A."/>
            <person name="Rosenthal A."/>
            <person name="Lehrach H."/>
            <person name="Meindl A."/>
            <person name="Minx P.J."/>
            <person name="Hillier L.W."/>
            <person name="Willard H.F."/>
            <person name="Wilson R.K."/>
            <person name="Waterston R.H."/>
            <person name="Rice C.M."/>
            <person name="Vaudin M."/>
            <person name="Coulson A."/>
            <person name="Nelson D.L."/>
            <person name="Weinstock G."/>
            <person name="Sulston J.E."/>
            <person name="Durbin R.M."/>
            <person name="Hubbard T."/>
            <person name="Gibbs R.A."/>
            <person name="Beck S."/>
            <person name="Rogers J."/>
            <person name="Bentley D.R."/>
        </authorList>
    </citation>
    <scope>NUCLEOTIDE SEQUENCE [LARGE SCALE GENOMIC DNA]</scope>
</reference>
<reference key="7">
    <citation type="journal article" date="2004" name="Genome Res.">
        <title>The status, quality, and expansion of the NIH full-length cDNA project: the Mammalian Gene Collection (MGC).</title>
        <authorList>
            <consortium name="The MGC Project Team"/>
        </authorList>
    </citation>
    <scope>NUCLEOTIDE SEQUENCE [LARGE SCALE MRNA] (ISOFORM 1)</scope>
    <source>
        <tissue>Brain</tissue>
    </source>
</reference>
<reference key="8">
    <citation type="journal article" date="1993" name="Cell">
        <title>Deficiency of the GPI anchor caused by a somatic mutation of the PIG-A gene in paroxysmal nocturnal hemoglobinuria.</title>
        <authorList>
            <person name="Takeda J."/>
            <person name="Miyata T."/>
            <person name="Kawagoe K."/>
            <person name="Iida Y."/>
            <person name="Endo Y."/>
            <person name="Fujita T."/>
            <person name="Takahashi M."/>
            <person name="Kitani T."/>
            <person name="Kinoshita T."/>
        </authorList>
    </citation>
    <scope>NUCLEOTIDE SEQUENCE [MRNA] OF 301-420</scope>
    <scope>INVOLVEMENT IN PNH1</scope>
</reference>
<reference key="9">
    <citation type="journal article" date="1998" name="EMBO J.">
        <title>The first step of glycosylphosphatidylinositol biosynthesis is mediated by a complex of PIG-A, PIG-H, PIG-C and GPI1.</title>
        <authorList>
            <person name="Watanabe R."/>
            <person name="Inoue N."/>
            <person name="Westfall B."/>
            <person name="Taron C.H."/>
            <person name="Orlean P."/>
            <person name="Takeda J."/>
            <person name="Kinoshita T."/>
        </authorList>
    </citation>
    <scope>COMPONENT OF GPI-GNT COMPLEX</scope>
    <scope>INTERACTION WITH PIGQ</scope>
</reference>
<reference key="10">
    <citation type="journal article" date="2005" name="Mol. Biol. Cell">
        <title>The initial enzyme for glycosylphosphatidylinositol biosynthesis requires PIG-Y, a seventh component.</title>
        <authorList>
            <person name="Murakami Y."/>
            <person name="Siripanyaphinyo U."/>
            <person name="Hong Y."/>
            <person name="Tashima Y."/>
            <person name="Maeda Y."/>
            <person name="Kinoshita T."/>
        </authorList>
    </citation>
    <scope>INTERACTION WITH PIGC; PIGH; PIGP; PIGQ; PIGY AND DPM2</scope>
    <scope>COMPONENT OF GPI-GNT COMPLEX</scope>
    <scope>CATALYTIC ACTIVITY</scope>
    <scope>FUNCTION</scope>
</reference>
<reference key="11">
    <citation type="journal article" date="2008" name="Mol. Cell">
        <title>Kinase-selective enrichment enables quantitative phosphoproteomics of the kinome across the cell cycle.</title>
        <authorList>
            <person name="Daub H."/>
            <person name="Olsen J.V."/>
            <person name="Bairlein M."/>
            <person name="Gnad F."/>
            <person name="Oppermann F.S."/>
            <person name="Korner R."/>
            <person name="Greff Z."/>
            <person name="Keri G."/>
            <person name="Stemmann O."/>
            <person name="Mann M."/>
        </authorList>
    </citation>
    <scope>PHOSPHORYLATION [LARGE SCALE ANALYSIS] AT SER-21</scope>
    <scope>IDENTIFICATION BY MASS SPECTROMETRY [LARGE SCALE ANALYSIS]</scope>
    <source>
        <tissue>Cervix carcinoma</tissue>
    </source>
</reference>
<reference key="12">
    <citation type="journal article" date="2012" name="Am. J. Hum. Genet.">
        <title>The phenotype of a germline mutation in PIGA: the gene somatically mutated in paroxysmal nocturnal hemoglobinuria.</title>
        <authorList>
            <person name="Johnston J.J."/>
            <person name="Gropman A.L."/>
            <person name="Sapp J.C."/>
            <person name="Teer J.K."/>
            <person name="Martin J.M."/>
            <person name="Liu C.F."/>
            <person name="Yuan X."/>
            <person name="Ye Z."/>
            <person name="Cheng L."/>
            <person name="Brodsky R.A."/>
            <person name="Biesecker L.G."/>
        </authorList>
    </citation>
    <scope>INVOLVEMENT IN MCAHS2</scope>
    <scope>VARIANT MCAHS2 412-ARG--ARG-484 DEL</scope>
    <scope>CHARACTERIZATION OF VARIANT MCAHS2 412-ARG--ARG-484 DEL</scope>
</reference>
<reference key="13">
    <citation type="journal article" date="2013" name="J. Proteome Res.">
        <title>Toward a comprehensive characterization of a human cancer cell phosphoproteome.</title>
        <authorList>
            <person name="Zhou H."/>
            <person name="Di Palma S."/>
            <person name="Preisinger C."/>
            <person name="Peng M."/>
            <person name="Polat A.N."/>
            <person name="Heck A.J."/>
            <person name="Mohammed S."/>
        </authorList>
    </citation>
    <scope>PHOSPHORYLATION [LARGE SCALE ANALYSIS] AT SER-21 AND SER-24</scope>
    <scope>IDENTIFICATION BY MASS SPECTROMETRY [LARGE SCALE ANALYSIS]</scope>
    <source>
        <tissue>Erythroleukemia</tissue>
    </source>
</reference>
<reference key="14">
    <citation type="journal article" date="1994" name="EMBO J.">
        <title>Paroxysmal nocturnal haemoglobinuria (PNH) is caused by somatic mutations in the PIG-A gene.</title>
        <authorList>
            <person name="Bessler M."/>
            <person name="Mason P.J."/>
            <person name="Hilmen P."/>
            <person name="Miyata T."/>
            <person name="Yamada N."/>
            <person name="Takeda J."/>
            <person name="Luzzato L."/>
            <person name="Kinoshita T."/>
        </authorList>
    </citation>
    <scope>VARIANT PNH1 PHE-155</scope>
</reference>
<reference key="15">
    <citation type="journal article" date="1994" name="Blood">
        <title>Mutations within the Piga gene in patients with paroxysmal nocturnal hemoglobinuria.</title>
        <authorList>
            <person name="Ware R.E."/>
            <person name="Rosse W.F."/>
            <person name="Howard T.A."/>
        </authorList>
    </citation>
    <scope>VARIANT PNH1 ASP-297</scope>
</reference>
<reference key="16">
    <citation type="journal article" date="1998" name="Blood Cells Mol. Dis.">
        <title>The spectrum of somatic mutations in the PIG-A gene in paroxysmal nocturnal hemoglobinuria includes large deletions and small duplications.</title>
        <authorList>
            <person name="Nafa K."/>
            <person name="Bessler M."/>
            <person name="Castro-Malaspina H."/>
            <person name="Jhanwar S."/>
            <person name="Luzzatto L."/>
        </authorList>
    </citation>
    <scope>VARIANTS PNH1 TRP-19; HIS-40; ALA-48; ASP-48; ARG-128 AND ARG-239</scope>
</reference>
<reference key="17">
    <citation type="journal article" date="2002" name="J. Clin. Pathol.">
        <title>Mutation analysis of the PIG-A gene in Korean patients with paroxysmal nocturnal haemoglobinuria.</title>
        <authorList>
            <person name="Yoon J.H."/>
            <person name="Cho H.I."/>
            <person name="Park S.S."/>
            <person name="Chang Y.H."/>
            <person name="Kim B.K."/>
        </authorList>
    </citation>
    <scope>VARIANT PNH1 VAL-48</scope>
</reference>
<reference key="18">
    <citation type="journal article" date="2014" name="Am. J. Med. Genet. A">
        <title>A novel germline PIGA mutation in Ferro-Cerebro-Cutaneous syndrome: a neurodegenerative X-linked epileptic encephalopathy with systemic iron-overload.</title>
        <authorList>
            <person name="Swoboda K.J."/>
            <person name="Margraf R.L."/>
            <person name="Carey J.C."/>
            <person name="Zhou H."/>
            <person name="Newcomb T.M."/>
            <person name="Coonrod E."/>
            <person name="Durtschi J."/>
            <person name="Mallempati K."/>
            <person name="Kumanovics A."/>
            <person name="Katz B.E."/>
            <person name="Voelkerding K.V."/>
            <person name="Opitz J.M."/>
        </authorList>
    </citation>
    <scope>VARIANT NEDEPH LEU-344 DEL</scope>
    <scope>INVOLVEMENT IN NEDEPH</scope>
</reference>
<reference key="19">
    <citation type="journal article" date="2014" name="Am. J. Med. Genet. A">
        <title>Expanding the spectrum of phenotypes associated with germline PIGA mutations: a child with developmental delay, accelerated linear growth, facial dysmorphisms, elevated alkaline phosphatase, and progressive CNS abnormalities.</title>
        <authorList>
            <person name="van der Crabben S.N."/>
            <person name="Harakalova M."/>
            <person name="Brilstra E.H."/>
            <person name="van Berkestijn F.M."/>
            <person name="Hofstede F.C."/>
            <person name="van Vught A.J."/>
            <person name="Cuppen E."/>
            <person name="Kloosterman W."/>
            <person name="Ploos van Amstel H.K."/>
            <person name="van Haaften G."/>
            <person name="van Haelst M.M."/>
        </authorList>
    </citation>
    <scope>VARIANT MCAHS2 LEU-93</scope>
</reference>
<reference key="20">
    <citation type="journal article" date="2014" name="Neurology">
        <title>PIGA mutations cause early-onset epileptic encephalopathies and distinctive features.</title>
        <authorList>
            <person name="Kato M."/>
            <person name="Saitsu H."/>
            <person name="Murakami Y."/>
            <person name="Kikuchi K."/>
            <person name="Watanabe S."/>
            <person name="Iai M."/>
            <person name="Miya K."/>
            <person name="Matsuura R."/>
            <person name="Takayama R."/>
            <person name="Ohba C."/>
            <person name="Nakashima M."/>
            <person name="Tsurusaki Y."/>
            <person name="Miyake N."/>
            <person name="Hamano S."/>
            <person name="Osaka H."/>
            <person name="Hayasaka K."/>
            <person name="Kinoshita T."/>
            <person name="Matsumoto N."/>
        </authorList>
    </citation>
    <scope>VARIANTS MCAHS2 LEU-77; TRP-119; PHE-206 AND 412-ARG--ARG-484 DEL</scope>
</reference>
<reference key="21">
    <citation type="journal article" date="2016" name="Am. J. Med. Genet. A">
        <title>A recurrent germline mutation in the PIGA gene causes Simpson-Golabi-Behmel syndrome type 2.</title>
        <authorList>
            <person name="Fauth C."/>
            <person name="Steindl K."/>
            <person name="Toutain A."/>
            <person name="Farrell S."/>
            <person name="Witsch-Baumgartner M."/>
            <person name="Karall D."/>
            <person name="Joset P."/>
            <person name="Boehm S."/>
            <person name="Baumer A."/>
            <person name="Maier O."/>
            <person name="Zschocke J."/>
            <person name="Weksberg R."/>
            <person name="Marshall C.R."/>
            <person name="Rauch A."/>
        </authorList>
    </citation>
    <scope>VARIANT MCAHS2 412-ARG--ARG-484 DEL</scope>
</reference>
<reference key="22">
    <citation type="journal article" date="2016" name="J. Med. Genet.">
        <title>Improving diagnosis and broadening the phenotypes in early-onset seizure and severe developmental delay disorders through gene panel analysis.</title>
        <authorList>
            <person name="Trump N."/>
            <person name="McTague A."/>
            <person name="Brittain H."/>
            <person name="Papandreou A."/>
            <person name="Meyer E."/>
            <person name="Ngoh A."/>
            <person name="Palmer R."/>
            <person name="Morrogh D."/>
            <person name="Boustred C."/>
            <person name="Hurst J.A."/>
            <person name="Jenkins L."/>
            <person name="Kurian M.A."/>
            <person name="Scott R.H."/>
        </authorList>
    </citation>
    <scope>VARIANT MCAHS2 SER-355</scope>
</reference>
<reference key="23">
    <citation type="journal article" date="2017" name="Hum. Mutat.">
        <title>Diagnostic targeted resequencing in 349 patients with drug-resistant pediatric epilepsies identifies causative mutations in 30 different genes.</title>
        <authorList>
            <consortium name="Clinical Study Group"/>
            <person name="Parrini E."/>
            <person name="Marini C."/>
            <person name="Mei D."/>
            <person name="Galuppi A."/>
            <person name="Cellini E."/>
            <person name="Pucatti D."/>
            <person name="Chiti L."/>
            <person name="Rutigliano D."/>
            <person name="Bianchini C."/>
            <person name="Virdo S."/>
            <person name="De Vita D."/>
            <person name="Bigoni S."/>
            <person name="Barba C."/>
            <person name="Mari F."/>
            <person name="Montomoli M."/>
            <person name="Pisano T."/>
            <person name="Rosati A."/>
            <person name="Guerrini R."/>
        </authorList>
    </citation>
    <scope>VARIANT VAL-135</scope>
</reference>
<reference key="24">
    <citation type="journal article" date="2022" name="Blood">
        <title>Constitutional PIGA mutations cause a novel subtype of hemochromatosis in patients with neurologic dysfunction.</title>
        <authorList>
            <person name="Muckenthaler L."/>
            <person name="Marques O."/>
            <person name="Colucci S."/>
            <person name="Kunz J."/>
            <person name="Fabrowski P."/>
            <person name="Bast T."/>
            <person name="Altamura S."/>
            <person name="Hoechsmann B."/>
            <person name="Schrezenmeier H."/>
            <person name="Langlotz M."/>
            <person name="Richter-Pechanska P."/>
            <person name="Rausch T."/>
            <person name="Hofmeister-Mielke N."/>
            <person name="Gunkel N."/>
            <person name="Hentze M.W."/>
            <person name="Kulozik A.E."/>
            <person name="Muckenthaler M.U."/>
        </authorList>
    </citation>
    <scope>VARIANTS NEDEPH GLN-77; LEU-127 AND PRO-344</scope>
    <scope>INVOLVEMENT IN NEDEPH</scope>
    <scope>CHARACTERIZATION OF VARIANTS NEDEPH GLN-77; LEU-344 DEL AND PRO-344</scope>
    <scope>CHARACTERIZATION OF VARIANT MCAHS2 412-ARG--ARG-484 DEL</scope>
</reference>
<protein>
    <recommendedName>
        <fullName evidence="20">Phosphatidylinositol N-acetylglucosaminyltransferase subunit A</fullName>
        <ecNumber evidence="21">2.4.1.198</ecNumber>
    </recommendedName>
    <alternativeName>
        <fullName>GlcNAc-PI synthesis protein</fullName>
    </alternativeName>
    <alternativeName>
        <fullName>Phosphatidylinositol-glycan biosynthesis class A protein</fullName>
        <shortName>PIG-A</shortName>
    </alternativeName>
</protein>
<sequence length="484" mass="54127">MACRGGAGNGHRASATLSRVSPGSLYTCRTRTHNICMVSDFFYPNMGGVESHIYQLSQCLIERGHKVIIVTHAYGNRKGIRYLTSGLKVYYLPLKVMYNQSTATTLFHSLPLLRYIFVRERVTIIHSHSSFSAMAHDALFHAKTMGLQTVFTDHSLFGFADVSSVLTNKLLTVSLCDTNHIICVSYTSKENTVLRAALNPEIVSVIPNAVDPTDFTPDPFRRHDSITIVVVSRLVYRKGIDLLSGIIPELCQKYPDLNFIIGGEGPKRIILEEVRERYQLHDRVRLLGALEHKDVRNVLVQGHIFLNTSLTEAFCMAIVEAASCGLQVVSTRVGGIPEVLPENLIILCEPSVKSLCEGLEKAIFQLKSGTLPAPENIHNIVKTFYTWRNVAERTEKVYDRVSVEAVLPMDKRLDRLISHCGPVTGYIFALLAVFNFLFLIFLRWMTPDSIIDVAIDATGPRGAWTNNYSHSKRGGENNEISETR</sequence>
<accession>P37287</accession>
<accession>B4E0V2</accession>
<accession>Q16025</accession>
<accession>Q16250</accession>
<evidence type="ECO:0000255" key="1"/>
<evidence type="ECO:0000255" key="2">
    <source>
        <dbReference type="PROSITE-ProRule" id="PRU00498"/>
    </source>
</evidence>
<evidence type="ECO:0000269" key="3">
    <source>
    </source>
</evidence>
<evidence type="ECO:0000269" key="4">
    <source>
    </source>
</evidence>
<evidence type="ECO:0000269" key="5">
    <source>
    </source>
</evidence>
<evidence type="ECO:0000269" key="6">
    <source>
    </source>
</evidence>
<evidence type="ECO:0000269" key="7">
    <source>
    </source>
</evidence>
<evidence type="ECO:0000269" key="8">
    <source>
    </source>
</evidence>
<evidence type="ECO:0000269" key="9">
    <source>
    </source>
</evidence>
<evidence type="ECO:0000269" key="10">
    <source>
    </source>
</evidence>
<evidence type="ECO:0000269" key="11">
    <source>
    </source>
</evidence>
<evidence type="ECO:0000269" key="12">
    <source>
    </source>
</evidence>
<evidence type="ECO:0000269" key="13">
    <source>
    </source>
</evidence>
<evidence type="ECO:0000269" key="14">
    <source>
    </source>
</evidence>
<evidence type="ECO:0000269" key="15">
    <source>
    </source>
</evidence>
<evidence type="ECO:0000269" key="16">
    <source>
    </source>
</evidence>
<evidence type="ECO:0000269" key="17">
    <source>
    </source>
</evidence>
<evidence type="ECO:0000303" key="18">
    <source>
    </source>
</evidence>
<evidence type="ECO:0000303" key="19">
    <source>
    </source>
</evidence>
<evidence type="ECO:0000305" key="20"/>
<evidence type="ECO:0000305" key="21">
    <source>
    </source>
</evidence>
<evidence type="ECO:0000312" key="22">
    <source>
        <dbReference type="HGNC" id="HGNC:8957"/>
    </source>
</evidence>
<evidence type="ECO:0007744" key="23">
    <source>
    </source>
</evidence>
<evidence type="ECO:0007744" key="24">
    <source>
    </source>
</evidence>
<name>PIGA_HUMAN</name>
<organism>
    <name type="scientific">Homo sapiens</name>
    <name type="common">Human</name>
    <dbReference type="NCBI Taxonomy" id="9606"/>
    <lineage>
        <taxon>Eukaryota</taxon>
        <taxon>Metazoa</taxon>
        <taxon>Chordata</taxon>
        <taxon>Craniata</taxon>
        <taxon>Vertebrata</taxon>
        <taxon>Euteleostomi</taxon>
        <taxon>Mammalia</taxon>
        <taxon>Eutheria</taxon>
        <taxon>Euarchontoglires</taxon>
        <taxon>Primates</taxon>
        <taxon>Haplorrhini</taxon>
        <taxon>Catarrhini</taxon>
        <taxon>Hominidae</taxon>
        <taxon>Homo</taxon>
    </lineage>
</organism>
<comment type="function">
    <text evidence="21">Catalytic subunit of the glycosylphosphatidylinositol-N-acetylglucosaminyltransferase (GPI-GnT) complex that catalyzes the transfer of N-acetylglucosamine from UDP-N-acetylglucosamine to phosphatidylinositol and participates in the first step of GPI biosynthesis.</text>
</comment>
<comment type="catalytic activity">
    <reaction evidence="21">
        <text>a 1,2-diacyl-sn-glycero-3-phospho-(1D-myo-inositol) + UDP-N-acetyl-alpha-D-glucosamine = a 6-(N-acetyl-alpha-D-glucosaminyl)-1-(1,2-diacyl-sn-glycero-3-phospho)-1D-myo-inositol + UDP + H(+)</text>
        <dbReference type="Rhea" id="RHEA:14789"/>
        <dbReference type="ChEBI" id="CHEBI:15378"/>
        <dbReference type="ChEBI" id="CHEBI:57265"/>
        <dbReference type="ChEBI" id="CHEBI:57705"/>
        <dbReference type="ChEBI" id="CHEBI:57880"/>
        <dbReference type="ChEBI" id="CHEBI:58223"/>
        <dbReference type="EC" id="2.4.1.198"/>
    </reaction>
    <physiologicalReaction direction="left-to-right" evidence="21">
        <dbReference type="Rhea" id="RHEA:14790"/>
    </physiologicalReaction>
</comment>
<comment type="pathway">
    <text evidence="5">Glycolipid biosynthesis; glycosylphosphatidylinositol-anchor biosynthesis.</text>
</comment>
<comment type="subunit">
    <text evidence="5 17">Component of the glycosylphosphatidylinositol-N-acetylglucosaminyltransferase (GPI-GnT) complex composed at least by PIGA, PIGC, PIGH, PIGP, PIGQ, PIGY and DPM2 (PubMed:16162815, PubMed:9463366). Interacts with PIGC, PIGH, PIGP, PIGQ and DPM2 (PubMed:16162815). Interacts directly with PIGY; this interaction regulates glycosylphosphatidylinositol-N-acetylglucosaminyltransferase activity (PubMed:16162815). Interacts with PIGQ (PubMed:9463366).</text>
</comment>
<comment type="interaction">
    <interactant intactId="EBI-26643054">
        <id>P37287</id>
    </interactant>
    <interactant intactId="EBI-9097061">
        <id>O94777</id>
        <label>DPM2</label>
    </interactant>
    <organismsDiffer>false</organismsDiffer>
    <experiments>4</experiments>
</comment>
<comment type="interaction">
    <interactant intactId="EBI-26643054">
        <id>P37287</id>
    </interactant>
    <interactant intactId="EBI-2803676">
        <id>Q14442</id>
        <label>PIGH</label>
    </interactant>
    <organismsDiffer>false</organismsDiffer>
    <experiments>6</experiments>
</comment>
<comment type="interaction">
    <interactant intactId="EBI-26643054">
        <id>P37287</id>
    </interactant>
    <interactant intactId="EBI-17630288">
        <id>P57054</id>
        <label>PIGP</label>
    </interactant>
    <organismsDiffer>false</organismsDiffer>
    <experiments>6</experiments>
</comment>
<comment type="interaction">
    <interactant intactId="EBI-26643054">
        <id>P37287</id>
    </interactant>
    <interactant intactId="EBI-2339260">
        <id>Q9BRB3</id>
        <label>PIGQ</label>
    </interactant>
    <organismsDiffer>false</organismsDiffer>
    <experiments>5</experiments>
</comment>
<comment type="interaction">
    <interactant intactId="EBI-26643054">
        <id>P37287</id>
    </interactant>
    <interactant intactId="EBI-3920125">
        <id>Q3MUY2</id>
        <label>PIGY</label>
    </interactant>
    <organismsDiffer>false</organismsDiffer>
    <experiments>6</experiments>
</comment>
<comment type="subcellular location">
    <subcellularLocation>
        <location>Endoplasmic reticulum membrane</location>
        <topology>Single-pass membrane protein</topology>
    </subcellularLocation>
</comment>
<comment type="alternative products">
    <event type="alternative splicing"/>
    <isoform>
        <id>P37287-1</id>
        <name>1</name>
        <sequence type="displayed"/>
    </isoform>
    <isoform>
        <id>P37287-2</id>
        <name>2</name>
        <sequence type="described" ref="VSP_001802"/>
    </isoform>
    <isoform>
        <id>P37287-3</id>
        <name>3</name>
        <sequence type="described" ref="VSP_043366 VSP_043367"/>
    </isoform>
</comment>
<comment type="disease" evidence="3 4 14 15 16">
    <disease id="DI-02141">
        <name>Paroxysmal nocturnal hemoglobinuria 1</name>
        <acronym>PNH1</acronym>
        <description>A disorder characterized by hemolytic anemia with hemoglobinuria, thromboses in large vessels, and a deficiency in hematopoiesis. Red blood cell breakdown with release of hemoglobin into the urine is manifested most prominently by dark-colored urine in the morning.</description>
        <dbReference type="MIM" id="300818"/>
    </disease>
    <text>Disease susceptibility is associated with variants affecting the gene represented in this entry.</text>
</comment>
<comment type="disease" evidence="6 7 8 9 10 11 13">
    <disease id="DI-03403">
        <name>Multiple congenital anomalies-hypotonia-seizures syndrome 2</name>
        <acronym>MCAHS2</acronym>
        <description>An X-linked recessive developmental disorder characterized by dysmorphic features, neonatal hypotonia, myoclonic seizures, and variable congenital anomalies involving the central nervous, cardiac, and urinary systems. Most affected individuals die in infancy.</description>
        <dbReference type="MIM" id="300868"/>
    </disease>
    <text>The disease is caused by variants affecting the gene represented in this entry.</text>
</comment>
<comment type="disease" evidence="8 13">
    <disease id="DI-06376">
        <name>Neurodevelopmental disorder with epilepsy and hemochromatosis</name>
        <acronym>NEDEPH</acronym>
        <description>An X-liked recessive disorder characterized by severe developmental delay, intellectual disability, early-onset epilepsy, and early systemic iron overload resulting in juvenile-onset hemochromatosis. Variable additional features may include joint contractures, visual or hearing impairment, and skin abnormalities.</description>
        <dbReference type="MIM" id="301072"/>
    </disease>
    <text evidence="13">The disease is caused by variants affecting the gene represented in this entry. PIGA deficiency causes disruption of iron homeostasis, due to failure to attach GPI anchors to hemojuvelin (HJV), a BMP coreceptor that regulates hepcidin (HAMP) expression. HAMP is an essential regulator of iron absorption and distribution across tissues. PIGA-deficient cells lack hemojuvelin surface expression and show significantly lower HAMP mRNA levels compared to control cells.</text>
</comment>
<comment type="similarity">
    <text evidence="20">Belongs to the glycosyltransferase group 1 family. Glycosyltransferase 4 subfamily.</text>
</comment>
<comment type="online information" name="Functional Glycomics Gateway - GTase">
    <link uri="http://www.functionalglycomics.org/glycomics/molecule/jsp/glycoEnzyme/viewGlycoEnzyme.jsp?gbpId=gt_hum_555"/>
    <text>Phosphatidylinositol N-acetylglucosaminyltransferase subunit A</text>
</comment>